<evidence type="ECO:0000255" key="1">
    <source>
        <dbReference type="HAMAP-Rule" id="MF_00536"/>
    </source>
</evidence>
<dbReference type="EC" id="1.1.1.262" evidence="1"/>
<dbReference type="EMBL" id="AE008923">
    <property type="protein sequence ID" value="AAM35752.1"/>
    <property type="molecule type" value="Genomic_DNA"/>
</dbReference>
<dbReference type="RefSeq" id="WP_011050582.1">
    <property type="nucleotide sequence ID" value="NC_003919.1"/>
</dbReference>
<dbReference type="SMR" id="Q8PP24"/>
<dbReference type="GeneID" id="66910053"/>
<dbReference type="KEGG" id="xac:XAC0864"/>
<dbReference type="eggNOG" id="COG1995">
    <property type="taxonomic scope" value="Bacteria"/>
</dbReference>
<dbReference type="HOGENOM" id="CLU_040168_2_0_6"/>
<dbReference type="UniPathway" id="UPA00244">
    <property type="reaction ID" value="UER00312"/>
</dbReference>
<dbReference type="Proteomes" id="UP000000576">
    <property type="component" value="Chromosome"/>
</dbReference>
<dbReference type="GO" id="GO:0005737">
    <property type="term" value="C:cytoplasm"/>
    <property type="evidence" value="ECO:0007669"/>
    <property type="project" value="UniProtKB-SubCell"/>
</dbReference>
<dbReference type="GO" id="GO:0050570">
    <property type="term" value="F:4-hydroxythreonine-4-phosphate dehydrogenase activity"/>
    <property type="evidence" value="ECO:0007669"/>
    <property type="project" value="UniProtKB-UniRule"/>
</dbReference>
<dbReference type="GO" id="GO:0050897">
    <property type="term" value="F:cobalt ion binding"/>
    <property type="evidence" value="ECO:0007669"/>
    <property type="project" value="UniProtKB-UniRule"/>
</dbReference>
<dbReference type="GO" id="GO:0000287">
    <property type="term" value="F:magnesium ion binding"/>
    <property type="evidence" value="ECO:0007669"/>
    <property type="project" value="UniProtKB-UniRule"/>
</dbReference>
<dbReference type="GO" id="GO:0051287">
    <property type="term" value="F:NAD binding"/>
    <property type="evidence" value="ECO:0007669"/>
    <property type="project" value="InterPro"/>
</dbReference>
<dbReference type="GO" id="GO:0008270">
    <property type="term" value="F:zinc ion binding"/>
    <property type="evidence" value="ECO:0007669"/>
    <property type="project" value="UniProtKB-UniRule"/>
</dbReference>
<dbReference type="GO" id="GO:0042823">
    <property type="term" value="P:pyridoxal phosphate biosynthetic process"/>
    <property type="evidence" value="ECO:0007669"/>
    <property type="project" value="UniProtKB-UniRule"/>
</dbReference>
<dbReference type="GO" id="GO:0008615">
    <property type="term" value="P:pyridoxine biosynthetic process"/>
    <property type="evidence" value="ECO:0007669"/>
    <property type="project" value="UniProtKB-UniRule"/>
</dbReference>
<dbReference type="Gene3D" id="3.40.718.10">
    <property type="entry name" value="Isopropylmalate Dehydrogenase"/>
    <property type="match status" value="1"/>
</dbReference>
<dbReference type="HAMAP" id="MF_00536">
    <property type="entry name" value="PdxA"/>
    <property type="match status" value="1"/>
</dbReference>
<dbReference type="InterPro" id="IPR037510">
    <property type="entry name" value="PdxA"/>
</dbReference>
<dbReference type="InterPro" id="IPR005255">
    <property type="entry name" value="PdxA_fam"/>
</dbReference>
<dbReference type="NCBIfam" id="TIGR00557">
    <property type="entry name" value="pdxA"/>
    <property type="match status" value="1"/>
</dbReference>
<dbReference type="PANTHER" id="PTHR30004">
    <property type="entry name" value="4-HYDROXYTHREONINE-4-PHOSPHATE DEHYDROGENASE"/>
    <property type="match status" value="1"/>
</dbReference>
<dbReference type="PANTHER" id="PTHR30004:SF5">
    <property type="entry name" value="4-HYDROXYTHREONINE-4-PHOSPHATE DEHYDROGENASE"/>
    <property type="match status" value="1"/>
</dbReference>
<dbReference type="Pfam" id="PF04166">
    <property type="entry name" value="PdxA"/>
    <property type="match status" value="1"/>
</dbReference>
<dbReference type="SUPFAM" id="SSF53659">
    <property type="entry name" value="Isocitrate/Isopropylmalate dehydrogenase-like"/>
    <property type="match status" value="1"/>
</dbReference>
<gene>
    <name evidence="1" type="primary">pdxA</name>
    <name type="ordered locus">XAC0864</name>
</gene>
<protein>
    <recommendedName>
        <fullName evidence="1">4-hydroxythreonine-4-phosphate dehydrogenase</fullName>
        <ecNumber evidence="1">1.1.1.262</ecNumber>
    </recommendedName>
    <alternativeName>
        <fullName evidence="1">4-(phosphohydroxy)-L-threonine dehydrogenase</fullName>
    </alternativeName>
</protein>
<name>PDXA_XANAC</name>
<accession>Q8PP24</accession>
<reference key="1">
    <citation type="journal article" date="2002" name="Nature">
        <title>Comparison of the genomes of two Xanthomonas pathogens with differing host specificities.</title>
        <authorList>
            <person name="da Silva A.C.R."/>
            <person name="Ferro J.A."/>
            <person name="Reinach F.C."/>
            <person name="Farah C.S."/>
            <person name="Furlan L.R."/>
            <person name="Quaggio R.B."/>
            <person name="Monteiro-Vitorello C.B."/>
            <person name="Van Sluys M.A."/>
            <person name="Almeida N.F. Jr."/>
            <person name="Alves L.M.C."/>
            <person name="do Amaral A.M."/>
            <person name="Bertolini M.C."/>
            <person name="Camargo L.E.A."/>
            <person name="Camarotte G."/>
            <person name="Cannavan F."/>
            <person name="Cardozo J."/>
            <person name="Chambergo F."/>
            <person name="Ciapina L.P."/>
            <person name="Cicarelli R.M.B."/>
            <person name="Coutinho L.L."/>
            <person name="Cursino-Santos J.R."/>
            <person name="El-Dorry H."/>
            <person name="Faria J.B."/>
            <person name="Ferreira A.J.S."/>
            <person name="Ferreira R.C.C."/>
            <person name="Ferro M.I.T."/>
            <person name="Formighieri E.F."/>
            <person name="Franco M.C."/>
            <person name="Greggio C.C."/>
            <person name="Gruber A."/>
            <person name="Katsuyama A.M."/>
            <person name="Kishi L.T."/>
            <person name="Leite R.P."/>
            <person name="Lemos E.G.M."/>
            <person name="Lemos M.V.F."/>
            <person name="Locali E.C."/>
            <person name="Machado M.A."/>
            <person name="Madeira A.M.B.N."/>
            <person name="Martinez-Rossi N.M."/>
            <person name="Martins E.C."/>
            <person name="Meidanis J."/>
            <person name="Menck C.F.M."/>
            <person name="Miyaki C.Y."/>
            <person name="Moon D.H."/>
            <person name="Moreira L.M."/>
            <person name="Novo M.T.M."/>
            <person name="Okura V.K."/>
            <person name="Oliveira M.C."/>
            <person name="Oliveira V.R."/>
            <person name="Pereira H.A."/>
            <person name="Rossi A."/>
            <person name="Sena J.A.D."/>
            <person name="Silva C."/>
            <person name="de Souza R.F."/>
            <person name="Spinola L.A.F."/>
            <person name="Takita M.A."/>
            <person name="Tamura R.E."/>
            <person name="Teixeira E.C."/>
            <person name="Tezza R.I.D."/>
            <person name="Trindade dos Santos M."/>
            <person name="Truffi D."/>
            <person name="Tsai S.M."/>
            <person name="White F.F."/>
            <person name="Setubal J.C."/>
            <person name="Kitajima J.P."/>
        </authorList>
    </citation>
    <scope>NUCLEOTIDE SEQUENCE [LARGE SCALE GENOMIC DNA]</scope>
    <source>
        <strain>306</strain>
    </source>
</reference>
<organism>
    <name type="scientific">Xanthomonas axonopodis pv. citri (strain 306)</name>
    <dbReference type="NCBI Taxonomy" id="190486"/>
    <lineage>
        <taxon>Bacteria</taxon>
        <taxon>Pseudomonadati</taxon>
        <taxon>Pseudomonadota</taxon>
        <taxon>Gammaproteobacteria</taxon>
        <taxon>Lysobacterales</taxon>
        <taxon>Lysobacteraceae</taxon>
        <taxon>Xanthomonas</taxon>
    </lineage>
</organism>
<keyword id="KW-0170">Cobalt</keyword>
<keyword id="KW-0963">Cytoplasm</keyword>
<keyword id="KW-0460">Magnesium</keyword>
<keyword id="KW-0479">Metal-binding</keyword>
<keyword id="KW-0520">NAD</keyword>
<keyword id="KW-0521">NADP</keyword>
<keyword id="KW-0560">Oxidoreductase</keyword>
<keyword id="KW-0664">Pyridoxine biosynthesis</keyword>
<keyword id="KW-0862">Zinc</keyword>
<comment type="function">
    <text evidence="1">Catalyzes the NAD(P)-dependent oxidation of 4-(phosphooxy)-L-threonine (HTP) into 2-amino-3-oxo-4-(phosphooxy)butyric acid which spontaneously decarboxylates to form 3-amino-2-oxopropyl phosphate (AHAP).</text>
</comment>
<comment type="catalytic activity">
    <reaction evidence="1">
        <text>4-(phosphooxy)-L-threonine + NAD(+) = 3-amino-2-oxopropyl phosphate + CO2 + NADH</text>
        <dbReference type="Rhea" id="RHEA:32275"/>
        <dbReference type="ChEBI" id="CHEBI:16526"/>
        <dbReference type="ChEBI" id="CHEBI:57279"/>
        <dbReference type="ChEBI" id="CHEBI:57540"/>
        <dbReference type="ChEBI" id="CHEBI:57945"/>
        <dbReference type="ChEBI" id="CHEBI:58452"/>
        <dbReference type="EC" id="1.1.1.262"/>
    </reaction>
</comment>
<comment type="cofactor">
    <cofactor evidence="1">
        <name>Zn(2+)</name>
        <dbReference type="ChEBI" id="CHEBI:29105"/>
    </cofactor>
    <cofactor evidence="1">
        <name>Mg(2+)</name>
        <dbReference type="ChEBI" id="CHEBI:18420"/>
    </cofactor>
    <cofactor evidence="1">
        <name>Co(2+)</name>
        <dbReference type="ChEBI" id="CHEBI:48828"/>
    </cofactor>
    <text evidence="1">Binds 1 divalent metal cation per subunit. Can use ions such as Zn(2+), Mg(2+) or Co(2+).</text>
</comment>
<comment type="pathway">
    <text evidence="1">Cofactor biosynthesis; pyridoxine 5'-phosphate biosynthesis; pyridoxine 5'-phosphate from D-erythrose 4-phosphate: step 4/5.</text>
</comment>
<comment type="subunit">
    <text evidence="1">Homodimer.</text>
</comment>
<comment type="subcellular location">
    <subcellularLocation>
        <location evidence="1">Cytoplasm</location>
    </subcellularLocation>
</comment>
<comment type="miscellaneous">
    <text evidence="1">The active site is located at the dimer interface.</text>
</comment>
<comment type="similarity">
    <text evidence="1">Belongs to the PdxA family.</text>
</comment>
<proteinExistence type="inferred from homology"/>
<feature type="chain" id="PRO_0000188837" description="4-hydroxythreonine-4-phosphate dehydrogenase">
    <location>
        <begin position="1"/>
        <end position="323"/>
    </location>
</feature>
<feature type="binding site" evidence="1">
    <location>
        <position position="133"/>
    </location>
    <ligand>
        <name>substrate</name>
    </ligand>
</feature>
<feature type="binding site" evidence="1">
    <location>
        <position position="161"/>
    </location>
    <ligand>
        <name>a divalent metal cation</name>
        <dbReference type="ChEBI" id="CHEBI:60240"/>
        <note>ligand shared between dimeric partners</note>
    </ligand>
</feature>
<feature type="binding site" evidence="1">
    <location>
        <position position="206"/>
    </location>
    <ligand>
        <name>a divalent metal cation</name>
        <dbReference type="ChEBI" id="CHEBI:60240"/>
        <note>ligand shared between dimeric partners</note>
    </ligand>
</feature>
<feature type="binding site" evidence="1">
    <location>
        <position position="261"/>
    </location>
    <ligand>
        <name>a divalent metal cation</name>
        <dbReference type="ChEBI" id="CHEBI:60240"/>
        <note>ligand shared between dimeric partners</note>
    </ligand>
</feature>
<feature type="binding site" evidence="1">
    <location>
        <position position="269"/>
    </location>
    <ligand>
        <name>substrate</name>
    </ligand>
</feature>
<feature type="binding site" evidence="1">
    <location>
        <position position="278"/>
    </location>
    <ligand>
        <name>substrate</name>
    </ligand>
</feature>
<feature type="binding site" evidence="1">
    <location>
        <position position="287"/>
    </location>
    <ligand>
        <name>substrate</name>
    </ligand>
</feature>
<sequence length="323" mass="33650">MMVPSLALVPGEPAGIGPELCVRLAQQPRSDAHLIAYADPDTLHSAATALSLPVRLLEPDQPARAPGDLPLHPIRQAVATRFGAPDPANAAAVIAGLRSAAADCLAGRLQGIVTGPVHKAAINAGGIAYTGTTELLAEQAGCPVVMMLANSIVRVALVTTHLPLRAVADAITADALLQCLRITHAAMQRDFGLEHPRIAVLGLNPHAGEDGHLGREELDIVIPALEQLRGEGMQLIGPLPADTAFLPQKLRGFDAVVAMYHDQGLPVLKYSGFEQAVNITLGLPYPRVAVDHGTALELAGRGIADPSSLMAATALCARLAARR</sequence>